<name>OAT_MACCJ</name>
<feature type="chain" id="PRO_1000187440" description="Ornithine aminotransferase">
    <location>
        <begin position="1"/>
        <end position="397"/>
    </location>
</feature>
<feature type="modified residue" description="N6-(pyridoxal phosphate)lysine" evidence="1">
    <location>
        <position position="255"/>
    </location>
</feature>
<dbReference type="EC" id="2.6.1.13" evidence="1"/>
<dbReference type="EMBL" id="AP009484">
    <property type="protein sequence ID" value="BAH17290.1"/>
    <property type="molecule type" value="Genomic_DNA"/>
</dbReference>
<dbReference type="RefSeq" id="WP_012656491.1">
    <property type="nucleotide sequence ID" value="NC_011999.1"/>
</dbReference>
<dbReference type="SMR" id="B9EAM9"/>
<dbReference type="STRING" id="458233.MCCL_0583"/>
<dbReference type="KEGG" id="mcl:MCCL_0583"/>
<dbReference type="eggNOG" id="COG4992">
    <property type="taxonomic scope" value="Bacteria"/>
</dbReference>
<dbReference type="HOGENOM" id="CLU_016922_10_3_9"/>
<dbReference type="OrthoDB" id="9807885at2"/>
<dbReference type="UniPathway" id="UPA00098">
    <property type="reaction ID" value="UER00358"/>
</dbReference>
<dbReference type="Proteomes" id="UP000001383">
    <property type="component" value="Chromosome"/>
</dbReference>
<dbReference type="GO" id="GO:0005737">
    <property type="term" value="C:cytoplasm"/>
    <property type="evidence" value="ECO:0007669"/>
    <property type="project" value="UniProtKB-SubCell"/>
</dbReference>
<dbReference type="GO" id="GO:0042802">
    <property type="term" value="F:identical protein binding"/>
    <property type="evidence" value="ECO:0007669"/>
    <property type="project" value="TreeGrafter"/>
</dbReference>
<dbReference type="GO" id="GO:0004587">
    <property type="term" value="F:ornithine aminotransferase activity"/>
    <property type="evidence" value="ECO:0007669"/>
    <property type="project" value="UniProtKB-UniRule"/>
</dbReference>
<dbReference type="GO" id="GO:0030170">
    <property type="term" value="F:pyridoxal phosphate binding"/>
    <property type="evidence" value="ECO:0007669"/>
    <property type="project" value="UniProtKB-UniRule"/>
</dbReference>
<dbReference type="GO" id="GO:0055129">
    <property type="term" value="P:L-proline biosynthetic process"/>
    <property type="evidence" value="ECO:0007669"/>
    <property type="project" value="UniProtKB-UniRule"/>
</dbReference>
<dbReference type="CDD" id="cd00610">
    <property type="entry name" value="OAT_like"/>
    <property type="match status" value="1"/>
</dbReference>
<dbReference type="FunFam" id="3.40.640.10:FF:000011">
    <property type="entry name" value="Ornithine aminotransferase"/>
    <property type="match status" value="1"/>
</dbReference>
<dbReference type="Gene3D" id="3.90.1150.10">
    <property type="entry name" value="Aspartate Aminotransferase, domain 1"/>
    <property type="match status" value="1"/>
</dbReference>
<dbReference type="Gene3D" id="3.40.640.10">
    <property type="entry name" value="Type I PLP-dependent aspartate aminotransferase-like (Major domain)"/>
    <property type="match status" value="1"/>
</dbReference>
<dbReference type="HAMAP" id="MF_01689">
    <property type="entry name" value="Ornith_aminotrans_3"/>
    <property type="match status" value="1"/>
</dbReference>
<dbReference type="InterPro" id="IPR005814">
    <property type="entry name" value="Aminotrans_3"/>
</dbReference>
<dbReference type="InterPro" id="IPR049704">
    <property type="entry name" value="Aminotrans_3_PPA_site"/>
</dbReference>
<dbReference type="InterPro" id="IPR050103">
    <property type="entry name" value="Class-III_PLP-dep_AT"/>
</dbReference>
<dbReference type="InterPro" id="IPR010164">
    <property type="entry name" value="Orn_aminotrans"/>
</dbReference>
<dbReference type="InterPro" id="IPR034757">
    <property type="entry name" value="Ornith_aminotrans_bact"/>
</dbReference>
<dbReference type="InterPro" id="IPR015424">
    <property type="entry name" value="PyrdxlP-dep_Trfase"/>
</dbReference>
<dbReference type="InterPro" id="IPR015421">
    <property type="entry name" value="PyrdxlP-dep_Trfase_major"/>
</dbReference>
<dbReference type="InterPro" id="IPR015422">
    <property type="entry name" value="PyrdxlP-dep_Trfase_small"/>
</dbReference>
<dbReference type="NCBIfam" id="TIGR01885">
    <property type="entry name" value="Orn_aminotrans"/>
    <property type="match status" value="1"/>
</dbReference>
<dbReference type="NCBIfam" id="NF002325">
    <property type="entry name" value="PRK01278.1"/>
    <property type="match status" value="1"/>
</dbReference>
<dbReference type="NCBIfam" id="NF003145">
    <property type="entry name" value="PRK04073.1"/>
    <property type="match status" value="1"/>
</dbReference>
<dbReference type="PANTHER" id="PTHR11986">
    <property type="entry name" value="AMINOTRANSFERASE CLASS III"/>
    <property type="match status" value="1"/>
</dbReference>
<dbReference type="PANTHER" id="PTHR11986:SF18">
    <property type="entry name" value="ORNITHINE AMINOTRANSFERASE, MITOCHONDRIAL"/>
    <property type="match status" value="1"/>
</dbReference>
<dbReference type="Pfam" id="PF00202">
    <property type="entry name" value="Aminotran_3"/>
    <property type="match status" value="1"/>
</dbReference>
<dbReference type="PIRSF" id="PIRSF000521">
    <property type="entry name" value="Transaminase_4ab_Lys_Orn"/>
    <property type="match status" value="1"/>
</dbReference>
<dbReference type="SUPFAM" id="SSF53383">
    <property type="entry name" value="PLP-dependent transferases"/>
    <property type="match status" value="1"/>
</dbReference>
<dbReference type="PROSITE" id="PS00600">
    <property type="entry name" value="AA_TRANSFER_CLASS_3"/>
    <property type="match status" value="1"/>
</dbReference>
<keyword id="KW-0028">Amino-acid biosynthesis</keyword>
<keyword id="KW-0032">Aminotransferase</keyword>
<keyword id="KW-0963">Cytoplasm</keyword>
<keyword id="KW-0641">Proline biosynthesis</keyword>
<keyword id="KW-0663">Pyridoxal phosphate</keyword>
<keyword id="KW-1185">Reference proteome</keyword>
<keyword id="KW-0808">Transferase</keyword>
<proteinExistence type="inferred from homology"/>
<accession>B9EAM9</accession>
<evidence type="ECO:0000255" key="1">
    <source>
        <dbReference type="HAMAP-Rule" id="MF_01689"/>
    </source>
</evidence>
<gene>
    <name evidence="1" type="primary">rocD</name>
    <name type="ordered locus">MCCL_0583</name>
</gene>
<organism>
    <name type="scientific">Macrococcus caseolyticus (strain JCSC5402)</name>
    <name type="common">Macrococcoides caseolyticum</name>
    <dbReference type="NCBI Taxonomy" id="458233"/>
    <lineage>
        <taxon>Bacteria</taxon>
        <taxon>Bacillati</taxon>
        <taxon>Bacillota</taxon>
        <taxon>Bacilli</taxon>
        <taxon>Bacillales</taxon>
        <taxon>Staphylococcaceae</taxon>
        <taxon>Macrococcoides</taxon>
    </lineage>
</organism>
<reference key="1">
    <citation type="journal article" date="2009" name="J. Bacteriol.">
        <title>Complete genome sequence of Macrococcus caseolyticus strain JCSCS5402, reflecting the ancestral genome of the human-pathogenic staphylococci.</title>
        <authorList>
            <person name="Baba T."/>
            <person name="Kuwahara-Arai K."/>
            <person name="Uchiyama I."/>
            <person name="Takeuchi F."/>
            <person name="Ito T."/>
            <person name="Hiramatsu K."/>
        </authorList>
    </citation>
    <scope>NUCLEOTIDE SEQUENCE [LARGE SCALE GENOMIC DNA]</scope>
    <source>
        <strain>JCSC5402</strain>
    </source>
</reference>
<protein>
    <recommendedName>
        <fullName evidence="1">Ornithine aminotransferase</fullName>
        <shortName evidence="1">OAT</shortName>
        <ecNumber evidence="1">2.6.1.13</ecNumber>
    </recommendedName>
    <alternativeName>
        <fullName evidence="1">Ornithine--oxo-acid aminotransferase</fullName>
    </alternativeName>
</protein>
<comment type="function">
    <text evidence="1">Catalyzes the interconversion of ornithine to glutamate semialdehyde.</text>
</comment>
<comment type="catalytic activity">
    <reaction evidence="1">
        <text>a 2-oxocarboxylate + L-ornithine = L-glutamate 5-semialdehyde + an L-alpha-amino acid</text>
        <dbReference type="Rhea" id="RHEA:13877"/>
        <dbReference type="ChEBI" id="CHEBI:35179"/>
        <dbReference type="ChEBI" id="CHEBI:46911"/>
        <dbReference type="ChEBI" id="CHEBI:58066"/>
        <dbReference type="ChEBI" id="CHEBI:59869"/>
        <dbReference type="EC" id="2.6.1.13"/>
    </reaction>
</comment>
<comment type="cofactor">
    <cofactor evidence="1">
        <name>pyridoxal 5'-phosphate</name>
        <dbReference type="ChEBI" id="CHEBI:597326"/>
    </cofactor>
</comment>
<comment type="pathway">
    <text evidence="1">Amino-acid biosynthesis; L-proline biosynthesis; L-glutamate 5-semialdehyde from L-ornithine: step 1/1.</text>
</comment>
<comment type="subcellular location">
    <subcellularLocation>
        <location evidence="1">Cytoplasm</location>
    </subcellularLocation>
</comment>
<comment type="similarity">
    <text evidence="1">Belongs to the class-III pyridoxal-phosphate-dependent aminotransferase family. OAT subfamily.</text>
</comment>
<sequence length="397" mass="43490">MTKSQDIIEITNHYGAPNYHPLPIVISEAEGVWVKDPEGNKYMDMLSAYSAVNQGHRHPKIIQALKEQADRVTLTSRAFHSDQLGPWYEKICKLAGKEMVLPMNTGAEAVETAIKAARRWAYDVKGVAKDQAEIIAMKGNFHGRTLAAVSLSSEAEYQRGYGPLLGGFKLVEFGDIEQIKSAITPNTAAVLLEPIQGEAGINIPEDGFLKQVRDVCTENNVLFIADEIQAGLGRSGKMFATDWDNVVPDMYILGKALGGGVFPISCVLADKEILEVFNAGSHGSTFGGNPLACAVSNAALDVLVDEKLAERSLELGEYFQSKLKEIDNPVIKEVRGKGLFIGVELNEAARPYCEQLKELGLLCKETHDTVIRFAPPLIISQEDLDWAIDKVKQVFSK</sequence>